<reference key="1">
    <citation type="journal article" date="1992" name="Mol. Microbiol.">
        <title>petR, located upstream of the fbcFBC operon encoding the cytochrome bc1 complex, is homologous to bacterial response regulators and necessary for photosynthetic and respiratory growth of Rhodobacter capsulatus.</title>
        <authorList>
            <person name="Tokito M.K."/>
            <person name="Daldal F."/>
        </authorList>
    </citation>
    <scope>NUCLEOTIDE SEQUENCE [GENOMIC DNA]</scope>
    <scope>FUNCTION</scope>
    <source>
        <strain>MT1131</strain>
    </source>
</reference>
<reference key="2">
    <citation type="journal article" date="2010" name="J. Bacteriol.">
        <title>Complete genome sequence of the photosynthetic purple nonsulfur bacterium Rhodobacter capsulatus SB 1003.</title>
        <authorList>
            <person name="Strnad H."/>
            <person name="Lapidus A."/>
            <person name="Paces J."/>
            <person name="Ulbrich P."/>
            <person name="Vlcek C."/>
            <person name="Paces V."/>
            <person name="Haselkorn R."/>
        </authorList>
    </citation>
    <scope>NUCLEOTIDE SEQUENCE [LARGE SCALE GENOMIC DNA]</scope>
    <source>
        <strain>ATCC BAA-309 / NBRC 16581 / SB1003</strain>
    </source>
</reference>
<organism>
    <name type="scientific">Rhodobacter capsulatus (strain ATCC BAA-309 / NBRC 16581 / SB1003)</name>
    <dbReference type="NCBI Taxonomy" id="272942"/>
    <lineage>
        <taxon>Bacteria</taxon>
        <taxon>Pseudomonadati</taxon>
        <taxon>Pseudomonadota</taxon>
        <taxon>Alphaproteobacteria</taxon>
        <taxon>Rhodobacterales</taxon>
        <taxon>Rhodobacter group</taxon>
        <taxon>Rhodobacter</taxon>
    </lineage>
</organism>
<name>PETR_RHOCB</name>
<feature type="chain" id="PRO_0000081183" description="Protein PetR">
    <location>
        <begin position="1"/>
        <end position="237"/>
    </location>
</feature>
<feature type="domain" description="Response regulatory" evidence="2">
    <location>
        <begin position="8"/>
        <end position="121"/>
    </location>
</feature>
<feature type="DNA-binding region" description="H-T-H motif" evidence="1">
    <location>
        <begin position="77"/>
        <end position="95"/>
    </location>
</feature>
<feature type="DNA-binding region" description="OmpR/PhoB-type" evidence="3">
    <location>
        <begin position="132"/>
        <end position="236"/>
    </location>
</feature>
<feature type="modified residue" description="4-aspartylphosphate" evidence="2">
    <location>
        <position position="57"/>
    </location>
</feature>
<protein>
    <recommendedName>
        <fullName>Protein PetR</fullName>
    </recommendedName>
</protein>
<dbReference type="EMBL" id="Z12113">
    <property type="protein sequence ID" value="CAA78098.2"/>
    <property type="status" value="ALT_INIT"/>
    <property type="molecule type" value="Genomic_DNA"/>
</dbReference>
<dbReference type="EMBL" id="CP001312">
    <property type="protein sequence ID" value="ADE86496.1"/>
    <property type="molecule type" value="Genomic_DNA"/>
</dbReference>
<dbReference type="PIR" id="S22632">
    <property type="entry name" value="S22632"/>
</dbReference>
<dbReference type="RefSeq" id="WP_031321486.1">
    <property type="nucleotide sequence ID" value="NC_014034.1"/>
</dbReference>
<dbReference type="SMR" id="P31079"/>
<dbReference type="STRING" id="272942.RCAP_rcc02767"/>
<dbReference type="GeneID" id="31491585"/>
<dbReference type="KEGG" id="rcp:RCAP_rcc02767"/>
<dbReference type="eggNOG" id="COG0745">
    <property type="taxonomic scope" value="Bacteria"/>
</dbReference>
<dbReference type="HOGENOM" id="CLU_000445_30_4_5"/>
<dbReference type="Proteomes" id="UP000002361">
    <property type="component" value="Chromosome"/>
</dbReference>
<dbReference type="GO" id="GO:0005829">
    <property type="term" value="C:cytosol"/>
    <property type="evidence" value="ECO:0007669"/>
    <property type="project" value="TreeGrafter"/>
</dbReference>
<dbReference type="GO" id="GO:0032993">
    <property type="term" value="C:protein-DNA complex"/>
    <property type="evidence" value="ECO:0007669"/>
    <property type="project" value="TreeGrafter"/>
</dbReference>
<dbReference type="GO" id="GO:0000156">
    <property type="term" value="F:phosphorelay response regulator activity"/>
    <property type="evidence" value="ECO:0007669"/>
    <property type="project" value="TreeGrafter"/>
</dbReference>
<dbReference type="GO" id="GO:0000976">
    <property type="term" value="F:transcription cis-regulatory region binding"/>
    <property type="evidence" value="ECO:0007669"/>
    <property type="project" value="TreeGrafter"/>
</dbReference>
<dbReference type="GO" id="GO:0006355">
    <property type="term" value="P:regulation of DNA-templated transcription"/>
    <property type="evidence" value="ECO:0007669"/>
    <property type="project" value="InterPro"/>
</dbReference>
<dbReference type="CDD" id="cd00383">
    <property type="entry name" value="trans_reg_C"/>
    <property type="match status" value="1"/>
</dbReference>
<dbReference type="Gene3D" id="3.40.50.2300">
    <property type="match status" value="1"/>
</dbReference>
<dbReference type="Gene3D" id="6.10.250.690">
    <property type="match status" value="1"/>
</dbReference>
<dbReference type="Gene3D" id="1.10.10.10">
    <property type="entry name" value="Winged helix-like DNA-binding domain superfamily/Winged helix DNA-binding domain"/>
    <property type="match status" value="1"/>
</dbReference>
<dbReference type="InterPro" id="IPR011006">
    <property type="entry name" value="CheY-like_superfamily"/>
</dbReference>
<dbReference type="InterPro" id="IPR001867">
    <property type="entry name" value="OmpR/PhoB-type_DNA-bd"/>
</dbReference>
<dbReference type="InterPro" id="IPR016032">
    <property type="entry name" value="Sig_transdc_resp-reg_C-effctor"/>
</dbReference>
<dbReference type="InterPro" id="IPR001789">
    <property type="entry name" value="Sig_transdc_resp-reg_receiver"/>
</dbReference>
<dbReference type="InterPro" id="IPR039420">
    <property type="entry name" value="WalR-like"/>
</dbReference>
<dbReference type="InterPro" id="IPR036388">
    <property type="entry name" value="WH-like_DNA-bd_sf"/>
</dbReference>
<dbReference type="PANTHER" id="PTHR48111:SF4">
    <property type="entry name" value="DNA-BINDING DUAL TRANSCRIPTIONAL REGULATOR OMPR"/>
    <property type="match status" value="1"/>
</dbReference>
<dbReference type="PANTHER" id="PTHR48111">
    <property type="entry name" value="REGULATOR OF RPOS"/>
    <property type="match status" value="1"/>
</dbReference>
<dbReference type="Pfam" id="PF00072">
    <property type="entry name" value="Response_reg"/>
    <property type="match status" value="1"/>
</dbReference>
<dbReference type="Pfam" id="PF00486">
    <property type="entry name" value="Trans_reg_C"/>
    <property type="match status" value="1"/>
</dbReference>
<dbReference type="SMART" id="SM00448">
    <property type="entry name" value="REC"/>
    <property type="match status" value="1"/>
</dbReference>
<dbReference type="SMART" id="SM00862">
    <property type="entry name" value="Trans_reg_C"/>
    <property type="match status" value="1"/>
</dbReference>
<dbReference type="SUPFAM" id="SSF46894">
    <property type="entry name" value="C-terminal effector domain of the bipartite response regulators"/>
    <property type="match status" value="1"/>
</dbReference>
<dbReference type="SUPFAM" id="SSF52172">
    <property type="entry name" value="CheY-like"/>
    <property type="match status" value="1"/>
</dbReference>
<dbReference type="PROSITE" id="PS51755">
    <property type="entry name" value="OMPR_PHOB"/>
    <property type="match status" value="1"/>
</dbReference>
<dbReference type="PROSITE" id="PS50110">
    <property type="entry name" value="RESPONSE_REGULATORY"/>
    <property type="match status" value="1"/>
</dbReference>
<accession>P31079</accession>
<accession>D5ANZ1</accession>
<sequence length="237" mass="26355">MMSASPPHLLIVDDDERIRGLLQKFLIRNGFLVTAGRDAAHARRLLSGLEFNLIVLDVMMPGEDGLSLTRDLRTKMATPILLLTARGETRERIEGLEAGADDYLPKPFEPKELLLRINAILRRVPEAVTAGPKYLSLGPLRYDLDRGELSQGDQPVRLTATEAALMRIFAAHAGEVIGRTELIEELGRDRSASAEEAAGDRAVDVQITRLRRKIEPDPREPRYLQTVRGLGYMLAPD</sequence>
<comment type="function">
    <text evidence="4">Necessary for photosynthetic and respiratory growth. Probable promoter-specific protein mediating the interaction between DNA and RNA polymerase.</text>
</comment>
<comment type="caution">
    <text evidence="5">It is uncertain whether Met-1 or Met-2 is the initiator.</text>
</comment>
<comment type="sequence caution" evidence="5">
    <conflict type="erroneous initiation">
        <sequence resource="EMBL-CDS" id="CAA78098"/>
    </conflict>
    <text>Truncated N-terminus.</text>
</comment>
<evidence type="ECO:0000250" key="1"/>
<evidence type="ECO:0000255" key="2">
    <source>
        <dbReference type="PROSITE-ProRule" id="PRU00169"/>
    </source>
</evidence>
<evidence type="ECO:0000255" key="3">
    <source>
        <dbReference type="PROSITE-ProRule" id="PRU01091"/>
    </source>
</evidence>
<evidence type="ECO:0000269" key="4">
    <source>
    </source>
</evidence>
<evidence type="ECO:0000305" key="5"/>
<proteinExistence type="inferred from homology"/>
<gene>
    <name type="primary">petR</name>
    <name type="ordered locus">RCAP_rcc02767</name>
</gene>
<keyword id="KW-0010">Activator</keyword>
<keyword id="KW-0238">DNA-binding</keyword>
<keyword id="KW-0597">Phosphoprotein</keyword>
<keyword id="KW-1185">Reference proteome</keyword>
<keyword id="KW-0804">Transcription</keyword>
<keyword id="KW-0805">Transcription regulation</keyword>
<keyword id="KW-0902">Two-component regulatory system</keyword>